<evidence type="ECO:0000255" key="1">
    <source>
        <dbReference type="HAMAP-Rule" id="MF_00339"/>
    </source>
</evidence>
<protein>
    <recommendedName>
        <fullName evidence="1">ATP-dependent 6-phosphofructokinase</fullName>
        <shortName evidence="1">ATP-PFK</shortName>
        <shortName evidence="1">Phosphofructokinase</shortName>
        <ecNumber evidence="1">2.7.1.11</ecNumber>
    </recommendedName>
    <alternativeName>
        <fullName evidence="1">Phosphohexokinase</fullName>
    </alternativeName>
</protein>
<proteinExistence type="inferred from homology"/>
<comment type="function">
    <text evidence="1">Catalyzes the phosphorylation of D-fructose 6-phosphate to fructose 1,6-bisphosphate by ATP, the first committing step of glycolysis.</text>
</comment>
<comment type="catalytic activity">
    <reaction evidence="1">
        <text>beta-D-fructose 6-phosphate + ATP = beta-D-fructose 1,6-bisphosphate + ADP + H(+)</text>
        <dbReference type="Rhea" id="RHEA:16109"/>
        <dbReference type="ChEBI" id="CHEBI:15378"/>
        <dbReference type="ChEBI" id="CHEBI:30616"/>
        <dbReference type="ChEBI" id="CHEBI:32966"/>
        <dbReference type="ChEBI" id="CHEBI:57634"/>
        <dbReference type="ChEBI" id="CHEBI:456216"/>
        <dbReference type="EC" id="2.7.1.11"/>
    </reaction>
</comment>
<comment type="cofactor">
    <cofactor evidence="1">
        <name>Mg(2+)</name>
        <dbReference type="ChEBI" id="CHEBI:18420"/>
    </cofactor>
</comment>
<comment type="activity regulation">
    <text evidence="1">Allosterically activated by ADP and other diphosphonucleosides, and allosterically inhibited by phosphoenolpyruvate.</text>
</comment>
<comment type="pathway">
    <text evidence="1">Carbohydrate degradation; glycolysis; D-glyceraldehyde 3-phosphate and glycerone phosphate from D-glucose: step 3/4.</text>
</comment>
<comment type="subunit">
    <text evidence="1">Homotetramer.</text>
</comment>
<comment type="subcellular location">
    <subcellularLocation>
        <location evidence="1">Cytoplasm</location>
    </subcellularLocation>
</comment>
<comment type="similarity">
    <text evidence="1">Belongs to the phosphofructokinase type A (PFKA) family. ATP-dependent PFK group I subfamily. Prokaryotic clade 'B1' sub-subfamily.</text>
</comment>
<organism>
    <name type="scientific">Streptococcus equi subsp. zooepidemicus (strain H70)</name>
    <dbReference type="NCBI Taxonomy" id="553483"/>
    <lineage>
        <taxon>Bacteria</taxon>
        <taxon>Bacillati</taxon>
        <taxon>Bacillota</taxon>
        <taxon>Bacilli</taxon>
        <taxon>Lactobacillales</taxon>
        <taxon>Streptococcaceae</taxon>
        <taxon>Streptococcus</taxon>
    </lineage>
</organism>
<gene>
    <name evidence="1" type="primary">pfkA</name>
    <name type="ordered locus">SZO_10830</name>
</gene>
<dbReference type="EC" id="2.7.1.11" evidence="1"/>
<dbReference type="EMBL" id="FM204884">
    <property type="protein sequence ID" value="CAW99465.1"/>
    <property type="molecule type" value="Genomic_DNA"/>
</dbReference>
<dbReference type="SMR" id="C0MGJ9"/>
<dbReference type="KEGG" id="seq:SZO_10830"/>
<dbReference type="eggNOG" id="COG0205">
    <property type="taxonomic scope" value="Bacteria"/>
</dbReference>
<dbReference type="HOGENOM" id="CLU_020655_0_1_9"/>
<dbReference type="UniPathway" id="UPA00109">
    <property type="reaction ID" value="UER00182"/>
</dbReference>
<dbReference type="Proteomes" id="UP000001368">
    <property type="component" value="Chromosome"/>
</dbReference>
<dbReference type="GO" id="GO:0005945">
    <property type="term" value="C:6-phosphofructokinase complex"/>
    <property type="evidence" value="ECO:0007669"/>
    <property type="project" value="TreeGrafter"/>
</dbReference>
<dbReference type="GO" id="GO:0003872">
    <property type="term" value="F:6-phosphofructokinase activity"/>
    <property type="evidence" value="ECO:0007669"/>
    <property type="project" value="UniProtKB-UniRule"/>
</dbReference>
<dbReference type="GO" id="GO:0016208">
    <property type="term" value="F:AMP binding"/>
    <property type="evidence" value="ECO:0007669"/>
    <property type="project" value="TreeGrafter"/>
</dbReference>
<dbReference type="GO" id="GO:0005524">
    <property type="term" value="F:ATP binding"/>
    <property type="evidence" value="ECO:0007669"/>
    <property type="project" value="UniProtKB-KW"/>
</dbReference>
<dbReference type="GO" id="GO:0070095">
    <property type="term" value="F:fructose-6-phosphate binding"/>
    <property type="evidence" value="ECO:0007669"/>
    <property type="project" value="TreeGrafter"/>
</dbReference>
<dbReference type="GO" id="GO:0042802">
    <property type="term" value="F:identical protein binding"/>
    <property type="evidence" value="ECO:0007669"/>
    <property type="project" value="TreeGrafter"/>
</dbReference>
<dbReference type="GO" id="GO:0046872">
    <property type="term" value="F:metal ion binding"/>
    <property type="evidence" value="ECO:0007669"/>
    <property type="project" value="UniProtKB-KW"/>
</dbReference>
<dbReference type="GO" id="GO:0048029">
    <property type="term" value="F:monosaccharide binding"/>
    <property type="evidence" value="ECO:0007669"/>
    <property type="project" value="TreeGrafter"/>
</dbReference>
<dbReference type="GO" id="GO:0061621">
    <property type="term" value="P:canonical glycolysis"/>
    <property type="evidence" value="ECO:0007669"/>
    <property type="project" value="TreeGrafter"/>
</dbReference>
<dbReference type="GO" id="GO:0030388">
    <property type="term" value="P:fructose 1,6-bisphosphate metabolic process"/>
    <property type="evidence" value="ECO:0007669"/>
    <property type="project" value="TreeGrafter"/>
</dbReference>
<dbReference type="GO" id="GO:0006002">
    <property type="term" value="P:fructose 6-phosphate metabolic process"/>
    <property type="evidence" value="ECO:0007669"/>
    <property type="project" value="InterPro"/>
</dbReference>
<dbReference type="FunFam" id="3.40.50.450:FF:000001">
    <property type="entry name" value="ATP-dependent 6-phosphofructokinase"/>
    <property type="match status" value="1"/>
</dbReference>
<dbReference type="FunFam" id="3.40.50.460:FF:000002">
    <property type="entry name" value="ATP-dependent 6-phosphofructokinase"/>
    <property type="match status" value="1"/>
</dbReference>
<dbReference type="Gene3D" id="3.40.50.450">
    <property type="match status" value="1"/>
</dbReference>
<dbReference type="Gene3D" id="3.40.50.460">
    <property type="entry name" value="Phosphofructokinase domain"/>
    <property type="match status" value="1"/>
</dbReference>
<dbReference type="HAMAP" id="MF_00339">
    <property type="entry name" value="Phosphofructokinase_I_B1"/>
    <property type="match status" value="1"/>
</dbReference>
<dbReference type="InterPro" id="IPR022953">
    <property type="entry name" value="ATP_PFK"/>
</dbReference>
<dbReference type="InterPro" id="IPR012003">
    <property type="entry name" value="ATP_PFK_prok-type"/>
</dbReference>
<dbReference type="InterPro" id="IPR012828">
    <property type="entry name" value="PFKA_ATP_prok"/>
</dbReference>
<dbReference type="InterPro" id="IPR015912">
    <property type="entry name" value="Phosphofructokinase_CS"/>
</dbReference>
<dbReference type="InterPro" id="IPR000023">
    <property type="entry name" value="Phosphofructokinase_dom"/>
</dbReference>
<dbReference type="InterPro" id="IPR035966">
    <property type="entry name" value="PKF_sf"/>
</dbReference>
<dbReference type="NCBIfam" id="TIGR02482">
    <property type="entry name" value="PFKA_ATP"/>
    <property type="match status" value="1"/>
</dbReference>
<dbReference type="NCBIfam" id="NF002872">
    <property type="entry name" value="PRK03202.1"/>
    <property type="match status" value="1"/>
</dbReference>
<dbReference type="PANTHER" id="PTHR13697:SF4">
    <property type="entry name" value="ATP-DEPENDENT 6-PHOSPHOFRUCTOKINASE"/>
    <property type="match status" value="1"/>
</dbReference>
<dbReference type="PANTHER" id="PTHR13697">
    <property type="entry name" value="PHOSPHOFRUCTOKINASE"/>
    <property type="match status" value="1"/>
</dbReference>
<dbReference type="Pfam" id="PF00365">
    <property type="entry name" value="PFK"/>
    <property type="match status" value="1"/>
</dbReference>
<dbReference type="PIRSF" id="PIRSF000532">
    <property type="entry name" value="ATP_PFK_prok"/>
    <property type="match status" value="1"/>
</dbReference>
<dbReference type="PRINTS" id="PR00476">
    <property type="entry name" value="PHFRCTKINASE"/>
</dbReference>
<dbReference type="SUPFAM" id="SSF53784">
    <property type="entry name" value="Phosphofructokinase"/>
    <property type="match status" value="1"/>
</dbReference>
<dbReference type="PROSITE" id="PS00433">
    <property type="entry name" value="PHOSPHOFRUCTOKINASE"/>
    <property type="match status" value="1"/>
</dbReference>
<name>PFKA_STRS7</name>
<sequence>MKRIAVLTSGGDAPGMNAAIRAVVRKAISEGMEVYGINRGYAGMVDGDIFPLGSKEVGDKISRGGTFLYSARYPEFAQLEGQLAGIEQLKKHGIEGVVVIGGDGSYHGAMRLTEHGFPAVGIPGTIDNDIAGTDYTIGFDTAVNTAVEAIDKLRDTSSSHGRTFVVEVMGRNAGDIALWAGIASGADQIIVPEEEFDIHKVVSTIKDDFENRGKNHHIIVLAEGVMSGEAFAQQLKEAGDESDLRVTNLGHILRGGSPTARDRVIASWMGAHAVELLKEGKGGLAVGIRNEELVESPILGSAEDGALFSLTDEGNIVVNNPHKARLDYAALNRSLAQ</sequence>
<reference key="1">
    <citation type="journal article" date="2009" name="PLoS Pathog.">
        <title>Genomic evidence for the evolution of Streptococcus equi: host restriction, increased virulence, and genetic exchange with human pathogens.</title>
        <authorList>
            <person name="Holden M.T.G."/>
            <person name="Heather Z."/>
            <person name="Paillot R."/>
            <person name="Steward K.F."/>
            <person name="Webb K."/>
            <person name="Ainslie F."/>
            <person name="Jourdan T."/>
            <person name="Bason N.C."/>
            <person name="Holroyd N.E."/>
            <person name="Mungall K."/>
            <person name="Quail M.A."/>
            <person name="Sanders M."/>
            <person name="Simmonds M."/>
            <person name="Willey D."/>
            <person name="Brooks K."/>
            <person name="Aanensen D.M."/>
            <person name="Spratt B.G."/>
            <person name="Jolley K.A."/>
            <person name="Maiden M.C.J."/>
            <person name="Kehoe M."/>
            <person name="Chanter N."/>
            <person name="Bentley S.D."/>
            <person name="Robinson C."/>
            <person name="Maskell D.J."/>
            <person name="Parkhill J."/>
            <person name="Waller A.S."/>
        </authorList>
    </citation>
    <scope>NUCLEOTIDE SEQUENCE [LARGE SCALE GENOMIC DNA]</scope>
    <source>
        <strain>H70</strain>
    </source>
</reference>
<feature type="chain" id="PRO_1000205251" description="ATP-dependent 6-phosphofructokinase">
    <location>
        <begin position="1"/>
        <end position="337"/>
    </location>
</feature>
<feature type="active site" description="Proton acceptor" evidence="1">
    <location>
        <position position="127"/>
    </location>
</feature>
<feature type="binding site" evidence="1">
    <location>
        <position position="11"/>
    </location>
    <ligand>
        <name>ATP</name>
        <dbReference type="ChEBI" id="CHEBI:30616"/>
    </ligand>
</feature>
<feature type="binding site" evidence="1">
    <location>
        <begin position="21"/>
        <end position="25"/>
    </location>
    <ligand>
        <name>ADP</name>
        <dbReference type="ChEBI" id="CHEBI:456216"/>
        <note>allosteric activator; ligand shared between dimeric partners</note>
    </ligand>
</feature>
<feature type="binding site" evidence="1">
    <location>
        <begin position="72"/>
        <end position="73"/>
    </location>
    <ligand>
        <name>ATP</name>
        <dbReference type="ChEBI" id="CHEBI:30616"/>
    </ligand>
</feature>
<feature type="binding site" evidence="1">
    <location>
        <begin position="102"/>
        <end position="105"/>
    </location>
    <ligand>
        <name>ATP</name>
        <dbReference type="ChEBI" id="CHEBI:30616"/>
    </ligand>
</feature>
<feature type="binding site" evidence="1">
    <location>
        <position position="103"/>
    </location>
    <ligand>
        <name>Mg(2+)</name>
        <dbReference type="ChEBI" id="CHEBI:18420"/>
        <note>catalytic</note>
    </ligand>
</feature>
<feature type="binding site" description="in other chain" evidence="1">
    <location>
        <begin position="125"/>
        <end position="127"/>
    </location>
    <ligand>
        <name>substrate</name>
        <note>ligand shared between dimeric partners</note>
    </ligand>
</feature>
<feature type="binding site" description="in other chain" evidence="1">
    <location>
        <position position="154"/>
    </location>
    <ligand>
        <name>ADP</name>
        <dbReference type="ChEBI" id="CHEBI:456216"/>
        <note>allosteric activator; ligand shared between dimeric partners</note>
    </ligand>
</feature>
<feature type="binding site" evidence="1">
    <location>
        <position position="162"/>
    </location>
    <ligand>
        <name>substrate</name>
        <note>ligand shared between dimeric partners</note>
    </ligand>
</feature>
<feature type="binding site" description="in other chain" evidence="1">
    <location>
        <begin position="169"/>
        <end position="171"/>
    </location>
    <ligand>
        <name>substrate</name>
        <note>ligand shared between dimeric partners</note>
    </ligand>
</feature>
<feature type="binding site" description="in other chain" evidence="1">
    <location>
        <begin position="185"/>
        <end position="187"/>
    </location>
    <ligand>
        <name>ADP</name>
        <dbReference type="ChEBI" id="CHEBI:456216"/>
        <note>allosteric activator; ligand shared between dimeric partners</note>
    </ligand>
</feature>
<feature type="binding site" description="in other chain" evidence="1">
    <location>
        <position position="212"/>
    </location>
    <ligand>
        <name>ADP</name>
        <dbReference type="ChEBI" id="CHEBI:456216"/>
        <note>allosteric activator; ligand shared between dimeric partners</note>
    </ligand>
</feature>
<feature type="binding site" description="in other chain" evidence="1">
    <location>
        <begin position="214"/>
        <end position="216"/>
    </location>
    <ligand>
        <name>ADP</name>
        <dbReference type="ChEBI" id="CHEBI:456216"/>
        <note>allosteric activator; ligand shared between dimeric partners</note>
    </ligand>
</feature>
<feature type="binding site" description="in other chain" evidence="1">
    <location>
        <position position="223"/>
    </location>
    <ligand>
        <name>substrate</name>
        <note>ligand shared between dimeric partners</note>
    </ligand>
</feature>
<feature type="binding site" evidence="1">
    <location>
        <position position="245"/>
    </location>
    <ligand>
        <name>substrate</name>
        <note>ligand shared between dimeric partners</note>
    </ligand>
</feature>
<feature type="binding site" description="in other chain" evidence="1">
    <location>
        <begin position="251"/>
        <end position="254"/>
    </location>
    <ligand>
        <name>substrate</name>
        <note>ligand shared between dimeric partners</note>
    </ligand>
</feature>
<keyword id="KW-0021">Allosteric enzyme</keyword>
<keyword id="KW-0067">ATP-binding</keyword>
<keyword id="KW-0963">Cytoplasm</keyword>
<keyword id="KW-0324">Glycolysis</keyword>
<keyword id="KW-0418">Kinase</keyword>
<keyword id="KW-0460">Magnesium</keyword>
<keyword id="KW-0479">Metal-binding</keyword>
<keyword id="KW-0547">Nucleotide-binding</keyword>
<keyword id="KW-0808">Transferase</keyword>
<accession>C0MGJ9</accession>